<gene>
    <name evidence="1" type="primary">ligA</name>
    <name type="ordered locus">H16_A2060</name>
</gene>
<organism>
    <name type="scientific">Cupriavidus necator (strain ATCC 17699 / DSM 428 / KCTC 22496 / NCIMB 10442 / H16 / Stanier 337)</name>
    <name type="common">Ralstonia eutropha</name>
    <dbReference type="NCBI Taxonomy" id="381666"/>
    <lineage>
        <taxon>Bacteria</taxon>
        <taxon>Pseudomonadati</taxon>
        <taxon>Pseudomonadota</taxon>
        <taxon>Betaproteobacteria</taxon>
        <taxon>Burkholderiales</taxon>
        <taxon>Burkholderiaceae</taxon>
        <taxon>Cupriavidus</taxon>
    </lineage>
</organism>
<evidence type="ECO:0000255" key="1">
    <source>
        <dbReference type="HAMAP-Rule" id="MF_01588"/>
    </source>
</evidence>
<evidence type="ECO:0000256" key="2">
    <source>
        <dbReference type="SAM" id="MobiDB-lite"/>
    </source>
</evidence>
<feature type="chain" id="PRO_0000313386" description="DNA ligase">
    <location>
        <begin position="1"/>
        <end position="709"/>
    </location>
</feature>
<feature type="domain" description="BRCT" evidence="1">
    <location>
        <begin position="623"/>
        <end position="709"/>
    </location>
</feature>
<feature type="region of interest" description="Disordered" evidence="2">
    <location>
        <begin position="1"/>
        <end position="20"/>
    </location>
</feature>
<feature type="active site" description="N6-AMP-lysine intermediate" evidence="1">
    <location>
        <position position="148"/>
    </location>
</feature>
<feature type="binding site" evidence="1">
    <location>
        <begin position="52"/>
        <end position="56"/>
    </location>
    <ligand>
        <name>NAD(+)</name>
        <dbReference type="ChEBI" id="CHEBI:57540"/>
    </ligand>
</feature>
<feature type="binding site" evidence="1">
    <location>
        <begin position="101"/>
        <end position="102"/>
    </location>
    <ligand>
        <name>NAD(+)</name>
        <dbReference type="ChEBI" id="CHEBI:57540"/>
    </ligand>
</feature>
<feature type="binding site" evidence="1">
    <location>
        <position position="146"/>
    </location>
    <ligand>
        <name>NAD(+)</name>
        <dbReference type="ChEBI" id="CHEBI:57540"/>
    </ligand>
</feature>
<feature type="binding site" evidence="1">
    <location>
        <position position="169"/>
    </location>
    <ligand>
        <name>NAD(+)</name>
        <dbReference type="ChEBI" id="CHEBI:57540"/>
    </ligand>
</feature>
<feature type="binding site" evidence="1">
    <location>
        <position position="205"/>
    </location>
    <ligand>
        <name>NAD(+)</name>
        <dbReference type="ChEBI" id="CHEBI:57540"/>
    </ligand>
</feature>
<feature type="binding site" evidence="1">
    <location>
        <position position="322"/>
    </location>
    <ligand>
        <name>NAD(+)</name>
        <dbReference type="ChEBI" id="CHEBI:57540"/>
    </ligand>
</feature>
<feature type="binding site" evidence="1">
    <location>
        <position position="346"/>
    </location>
    <ligand>
        <name>NAD(+)</name>
        <dbReference type="ChEBI" id="CHEBI:57540"/>
    </ligand>
</feature>
<feature type="binding site" evidence="1">
    <location>
        <position position="440"/>
    </location>
    <ligand>
        <name>Zn(2+)</name>
        <dbReference type="ChEBI" id="CHEBI:29105"/>
    </ligand>
</feature>
<feature type="binding site" evidence="1">
    <location>
        <position position="443"/>
    </location>
    <ligand>
        <name>Zn(2+)</name>
        <dbReference type="ChEBI" id="CHEBI:29105"/>
    </ligand>
</feature>
<feature type="binding site" evidence="1">
    <location>
        <position position="458"/>
    </location>
    <ligand>
        <name>Zn(2+)</name>
        <dbReference type="ChEBI" id="CHEBI:29105"/>
    </ligand>
</feature>
<feature type="binding site" evidence="1">
    <location>
        <position position="464"/>
    </location>
    <ligand>
        <name>Zn(2+)</name>
        <dbReference type="ChEBI" id="CHEBI:29105"/>
    </ligand>
</feature>
<sequence>MTATHRGAQADASAPAGPLPPEAAAKRVAWLRDELDRHNYQYYVLDAPTIPDAEYDALFSELQALELEHPELQTPDSPTQRVGGEPLSAFDSVRHRVPMLSLNNGFADDDVLNFDRRCAQGLGRTAPAAGEQDLFSAADAVEYACELKFDGLAMSLRYEDGRLVQAATRGDGETGEDVTVNVRTIKAIPLKLRGQAPAVLEVRGEVFMYRGDFDKLNERQAEAGEKTFVNPRNAAAGSLRQLDPRITAKRPLSFFAYGLGELQGVDRPPTHSAMLDGFAALGLPVCKDRAVVKGAQGLLDFYRDIGQRRDALPYDIDGVVYKVNALAEQERLGFVSRAPRFALAHKFPAQEMTTIVEDIEVQVGRTGAITPVARLKPVFVGGVTVTNATLHNEDEIRRKDVHIGDTVIVRRAGDVIPEVVAVVTERRPDDARAFVMPTACPVCGSHIEKLEDEAIARCTGGLICAAQRKQALLHFAQRRAMDIEGLGDKLVEQLVDQGIVRTPADLFKLGVAKLAALERMADKSAANLVAAIDASRETTMNRFIFALGIRHVGEATAKDLARHFGKLDALMAADEAALLEVNDVGPVVAQSIAHFFAEPHNVEVIEQLRAAGVHWTESEPVAKAPAPLSGKTFVLTGTLPTMSREDAKELLEAAGAKVAGSVSKKTDYVVAGAEAGSKLDKAEALGVPVLDEAGMLALLAEAGAAPAQE</sequence>
<protein>
    <recommendedName>
        <fullName evidence="1">DNA ligase</fullName>
        <ecNumber evidence="1">6.5.1.2</ecNumber>
    </recommendedName>
    <alternativeName>
        <fullName evidence="1">Polydeoxyribonucleotide synthase [NAD(+)]</fullName>
    </alternativeName>
</protein>
<reference key="1">
    <citation type="journal article" date="2006" name="Nat. Biotechnol.">
        <title>Genome sequence of the bioplastic-producing 'Knallgas' bacterium Ralstonia eutropha H16.</title>
        <authorList>
            <person name="Pohlmann A."/>
            <person name="Fricke W.F."/>
            <person name="Reinecke F."/>
            <person name="Kusian B."/>
            <person name="Liesegang H."/>
            <person name="Cramm R."/>
            <person name="Eitinger T."/>
            <person name="Ewering C."/>
            <person name="Poetter M."/>
            <person name="Schwartz E."/>
            <person name="Strittmatter A."/>
            <person name="Voss I."/>
            <person name="Gottschalk G."/>
            <person name="Steinbuechel A."/>
            <person name="Friedrich B."/>
            <person name="Bowien B."/>
        </authorList>
    </citation>
    <scope>NUCLEOTIDE SEQUENCE [LARGE SCALE GENOMIC DNA]</scope>
    <source>
        <strain>ATCC 17699 / DSM 428 / KCTC 22496 / NCIMB 10442 / H16 / Stanier 337</strain>
    </source>
</reference>
<dbReference type="EC" id="6.5.1.2" evidence="1"/>
<dbReference type="EMBL" id="AM260479">
    <property type="protein sequence ID" value="CAJ93160.1"/>
    <property type="molecule type" value="Genomic_DNA"/>
</dbReference>
<dbReference type="RefSeq" id="WP_010814173.1">
    <property type="nucleotide sequence ID" value="NZ_CP039287.1"/>
</dbReference>
<dbReference type="SMR" id="Q0KA11"/>
<dbReference type="STRING" id="381666.H16_A2060"/>
<dbReference type="KEGG" id="reh:H16_A2060"/>
<dbReference type="eggNOG" id="COG0272">
    <property type="taxonomic scope" value="Bacteria"/>
</dbReference>
<dbReference type="HOGENOM" id="CLU_007764_2_1_4"/>
<dbReference type="OrthoDB" id="9759736at2"/>
<dbReference type="Proteomes" id="UP000008210">
    <property type="component" value="Chromosome 1"/>
</dbReference>
<dbReference type="GO" id="GO:0005829">
    <property type="term" value="C:cytosol"/>
    <property type="evidence" value="ECO:0007669"/>
    <property type="project" value="TreeGrafter"/>
</dbReference>
<dbReference type="GO" id="GO:0003677">
    <property type="term" value="F:DNA binding"/>
    <property type="evidence" value="ECO:0007669"/>
    <property type="project" value="InterPro"/>
</dbReference>
<dbReference type="GO" id="GO:0003911">
    <property type="term" value="F:DNA ligase (NAD+) activity"/>
    <property type="evidence" value="ECO:0007669"/>
    <property type="project" value="UniProtKB-UniRule"/>
</dbReference>
<dbReference type="GO" id="GO:0046872">
    <property type="term" value="F:metal ion binding"/>
    <property type="evidence" value="ECO:0007669"/>
    <property type="project" value="UniProtKB-KW"/>
</dbReference>
<dbReference type="GO" id="GO:0006281">
    <property type="term" value="P:DNA repair"/>
    <property type="evidence" value="ECO:0007669"/>
    <property type="project" value="UniProtKB-KW"/>
</dbReference>
<dbReference type="GO" id="GO:0006260">
    <property type="term" value="P:DNA replication"/>
    <property type="evidence" value="ECO:0007669"/>
    <property type="project" value="UniProtKB-KW"/>
</dbReference>
<dbReference type="CDD" id="cd17748">
    <property type="entry name" value="BRCT_DNA_ligase_like"/>
    <property type="match status" value="1"/>
</dbReference>
<dbReference type="CDD" id="cd00114">
    <property type="entry name" value="LIGANc"/>
    <property type="match status" value="1"/>
</dbReference>
<dbReference type="FunFam" id="1.10.150.20:FF:000006">
    <property type="entry name" value="DNA ligase"/>
    <property type="match status" value="1"/>
</dbReference>
<dbReference type="FunFam" id="1.10.150.20:FF:000007">
    <property type="entry name" value="DNA ligase"/>
    <property type="match status" value="1"/>
</dbReference>
<dbReference type="FunFam" id="1.10.287.610:FF:000002">
    <property type="entry name" value="DNA ligase"/>
    <property type="match status" value="1"/>
</dbReference>
<dbReference type="FunFam" id="2.40.50.140:FF:000012">
    <property type="entry name" value="DNA ligase"/>
    <property type="match status" value="1"/>
</dbReference>
<dbReference type="FunFam" id="3.30.470.30:FF:000001">
    <property type="entry name" value="DNA ligase"/>
    <property type="match status" value="1"/>
</dbReference>
<dbReference type="FunFam" id="3.40.50.10190:FF:000054">
    <property type="entry name" value="DNA ligase"/>
    <property type="match status" value="1"/>
</dbReference>
<dbReference type="Gene3D" id="6.20.10.30">
    <property type="match status" value="1"/>
</dbReference>
<dbReference type="Gene3D" id="1.10.150.20">
    <property type="entry name" value="5' to 3' exonuclease, C-terminal subdomain"/>
    <property type="match status" value="2"/>
</dbReference>
<dbReference type="Gene3D" id="3.40.50.10190">
    <property type="entry name" value="BRCT domain"/>
    <property type="match status" value="1"/>
</dbReference>
<dbReference type="Gene3D" id="3.30.470.30">
    <property type="entry name" value="DNA ligase/mRNA capping enzyme"/>
    <property type="match status" value="1"/>
</dbReference>
<dbReference type="Gene3D" id="1.10.287.610">
    <property type="entry name" value="Helix hairpin bin"/>
    <property type="match status" value="1"/>
</dbReference>
<dbReference type="Gene3D" id="2.40.50.140">
    <property type="entry name" value="Nucleic acid-binding proteins"/>
    <property type="match status" value="1"/>
</dbReference>
<dbReference type="HAMAP" id="MF_01588">
    <property type="entry name" value="DNA_ligase_A"/>
    <property type="match status" value="1"/>
</dbReference>
<dbReference type="InterPro" id="IPR001357">
    <property type="entry name" value="BRCT_dom"/>
</dbReference>
<dbReference type="InterPro" id="IPR036420">
    <property type="entry name" value="BRCT_dom_sf"/>
</dbReference>
<dbReference type="InterPro" id="IPR041663">
    <property type="entry name" value="DisA/LigA_HHH"/>
</dbReference>
<dbReference type="InterPro" id="IPR001679">
    <property type="entry name" value="DNA_ligase"/>
</dbReference>
<dbReference type="InterPro" id="IPR018239">
    <property type="entry name" value="DNA_ligase_AS"/>
</dbReference>
<dbReference type="InterPro" id="IPR033136">
    <property type="entry name" value="DNA_ligase_CS"/>
</dbReference>
<dbReference type="InterPro" id="IPR013839">
    <property type="entry name" value="DNAligase_adenylation"/>
</dbReference>
<dbReference type="InterPro" id="IPR013840">
    <property type="entry name" value="DNAligase_N"/>
</dbReference>
<dbReference type="InterPro" id="IPR003583">
    <property type="entry name" value="Hlx-hairpin-Hlx_DNA-bd_motif"/>
</dbReference>
<dbReference type="InterPro" id="IPR012340">
    <property type="entry name" value="NA-bd_OB-fold"/>
</dbReference>
<dbReference type="InterPro" id="IPR004150">
    <property type="entry name" value="NAD_DNA_ligase_OB"/>
</dbReference>
<dbReference type="InterPro" id="IPR010994">
    <property type="entry name" value="RuvA_2-like"/>
</dbReference>
<dbReference type="InterPro" id="IPR004149">
    <property type="entry name" value="Znf_DNAligase_C4"/>
</dbReference>
<dbReference type="NCBIfam" id="TIGR00575">
    <property type="entry name" value="dnlj"/>
    <property type="match status" value="1"/>
</dbReference>
<dbReference type="NCBIfam" id="NF005932">
    <property type="entry name" value="PRK07956.1"/>
    <property type="match status" value="1"/>
</dbReference>
<dbReference type="PANTHER" id="PTHR23389">
    <property type="entry name" value="CHROMOSOME TRANSMISSION FIDELITY FACTOR 18"/>
    <property type="match status" value="1"/>
</dbReference>
<dbReference type="PANTHER" id="PTHR23389:SF9">
    <property type="entry name" value="DNA LIGASE"/>
    <property type="match status" value="1"/>
</dbReference>
<dbReference type="Pfam" id="PF00533">
    <property type="entry name" value="BRCT"/>
    <property type="match status" value="1"/>
</dbReference>
<dbReference type="Pfam" id="PF01653">
    <property type="entry name" value="DNA_ligase_aden"/>
    <property type="match status" value="1"/>
</dbReference>
<dbReference type="Pfam" id="PF03120">
    <property type="entry name" value="DNA_ligase_OB"/>
    <property type="match status" value="1"/>
</dbReference>
<dbReference type="Pfam" id="PF03119">
    <property type="entry name" value="DNA_ligase_ZBD"/>
    <property type="match status" value="1"/>
</dbReference>
<dbReference type="Pfam" id="PF12826">
    <property type="entry name" value="HHH_2"/>
    <property type="match status" value="1"/>
</dbReference>
<dbReference type="Pfam" id="PF14520">
    <property type="entry name" value="HHH_5"/>
    <property type="match status" value="1"/>
</dbReference>
<dbReference type="Pfam" id="PF22745">
    <property type="entry name" value="Nlig-Ia"/>
    <property type="match status" value="1"/>
</dbReference>
<dbReference type="PIRSF" id="PIRSF001604">
    <property type="entry name" value="LigA"/>
    <property type="match status" value="1"/>
</dbReference>
<dbReference type="SMART" id="SM00292">
    <property type="entry name" value="BRCT"/>
    <property type="match status" value="1"/>
</dbReference>
<dbReference type="SMART" id="SM00278">
    <property type="entry name" value="HhH1"/>
    <property type="match status" value="4"/>
</dbReference>
<dbReference type="SMART" id="SM00532">
    <property type="entry name" value="LIGANc"/>
    <property type="match status" value="1"/>
</dbReference>
<dbReference type="SUPFAM" id="SSF52113">
    <property type="entry name" value="BRCT domain"/>
    <property type="match status" value="1"/>
</dbReference>
<dbReference type="SUPFAM" id="SSF56091">
    <property type="entry name" value="DNA ligase/mRNA capping enzyme, catalytic domain"/>
    <property type="match status" value="1"/>
</dbReference>
<dbReference type="SUPFAM" id="SSF50249">
    <property type="entry name" value="Nucleic acid-binding proteins"/>
    <property type="match status" value="1"/>
</dbReference>
<dbReference type="SUPFAM" id="SSF47781">
    <property type="entry name" value="RuvA domain 2-like"/>
    <property type="match status" value="1"/>
</dbReference>
<dbReference type="PROSITE" id="PS50172">
    <property type="entry name" value="BRCT"/>
    <property type="match status" value="1"/>
</dbReference>
<dbReference type="PROSITE" id="PS01055">
    <property type="entry name" value="DNA_LIGASE_N1"/>
    <property type="match status" value="1"/>
</dbReference>
<dbReference type="PROSITE" id="PS01056">
    <property type="entry name" value="DNA_LIGASE_N2"/>
    <property type="match status" value="1"/>
</dbReference>
<proteinExistence type="inferred from homology"/>
<comment type="function">
    <text evidence="1">DNA ligase that catalyzes the formation of phosphodiester linkages between 5'-phosphoryl and 3'-hydroxyl groups in double-stranded DNA using NAD as a coenzyme and as the energy source for the reaction. It is essential for DNA replication and repair of damaged DNA.</text>
</comment>
<comment type="catalytic activity">
    <reaction evidence="1">
        <text>NAD(+) + (deoxyribonucleotide)n-3'-hydroxyl + 5'-phospho-(deoxyribonucleotide)m = (deoxyribonucleotide)n+m + AMP + beta-nicotinamide D-nucleotide.</text>
        <dbReference type="EC" id="6.5.1.2"/>
    </reaction>
</comment>
<comment type="cofactor">
    <cofactor evidence="1">
        <name>Mg(2+)</name>
        <dbReference type="ChEBI" id="CHEBI:18420"/>
    </cofactor>
    <cofactor evidence="1">
        <name>Mn(2+)</name>
        <dbReference type="ChEBI" id="CHEBI:29035"/>
    </cofactor>
</comment>
<comment type="similarity">
    <text evidence="1">Belongs to the NAD-dependent DNA ligase family. LigA subfamily.</text>
</comment>
<accession>Q0KA11</accession>
<keyword id="KW-0227">DNA damage</keyword>
<keyword id="KW-0234">DNA repair</keyword>
<keyword id="KW-0235">DNA replication</keyword>
<keyword id="KW-0436">Ligase</keyword>
<keyword id="KW-0460">Magnesium</keyword>
<keyword id="KW-0464">Manganese</keyword>
<keyword id="KW-0479">Metal-binding</keyword>
<keyword id="KW-0520">NAD</keyword>
<keyword id="KW-1185">Reference proteome</keyword>
<keyword id="KW-0862">Zinc</keyword>
<name>DNLJ_CUPNH</name>